<dbReference type="EMBL" id="CP001048">
    <property type="protein sequence ID" value="ACC87027.1"/>
    <property type="molecule type" value="Genomic_DNA"/>
</dbReference>
<dbReference type="RefSeq" id="WP_012413399.1">
    <property type="nucleotide sequence ID" value="NZ_CP009780.1"/>
</dbReference>
<dbReference type="KEGG" id="ypb:YPTS_0028"/>
<dbReference type="PATRIC" id="fig|502801.10.peg.3705"/>
<dbReference type="GO" id="GO:0005886">
    <property type="term" value="C:plasma membrane"/>
    <property type="evidence" value="ECO:0007669"/>
    <property type="project" value="UniProtKB-SubCell"/>
</dbReference>
<dbReference type="HAMAP" id="MF_00672">
    <property type="entry name" value="UPF0761"/>
    <property type="match status" value="1"/>
</dbReference>
<dbReference type="InterPro" id="IPR023679">
    <property type="entry name" value="UPF0761_bac"/>
</dbReference>
<dbReference type="InterPro" id="IPR017039">
    <property type="entry name" value="Virul_fac_BrkB"/>
</dbReference>
<dbReference type="NCBIfam" id="NF002457">
    <property type="entry name" value="PRK01637.1"/>
    <property type="match status" value="1"/>
</dbReference>
<dbReference type="NCBIfam" id="TIGR00765">
    <property type="entry name" value="yihY_not_rbn"/>
    <property type="match status" value="1"/>
</dbReference>
<dbReference type="PANTHER" id="PTHR30213">
    <property type="entry name" value="INNER MEMBRANE PROTEIN YHJD"/>
    <property type="match status" value="1"/>
</dbReference>
<dbReference type="PANTHER" id="PTHR30213:SF0">
    <property type="entry name" value="UPF0761 MEMBRANE PROTEIN YIHY"/>
    <property type="match status" value="1"/>
</dbReference>
<dbReference type="Pfam" id="PF03631">
    <property type="entry name" value="Virul_fac_BrkB"/>
    <property type="match status" value="1"/>
</dbReference>
<dbReference type="PIRSF" id="PIRSF035875">
    <property type="entry name" value="RNase_BN"/>
    <property type="match status" value="1"/>
</dbReference>
<proteinExistence type="inferred from homology"/>
<comment type="subcellular location">
    <subcellularLocation>
        <location evidence="1">Cell inner membrane</location>
        <topology evidence="1">Multi-pass membrane protein</topology>
    </subcellularLocation>
</comment>
<comment type="similarity">
    <text evidence="1">Belongs to the UPF0761 family.</text>
</comment>
<sequence>MASFRRFRLLSPLKPCVTFGRMLYTRIDKDGLTMLAGHLAYVSLLSLVPLITVIFALFAAFPMFAEISIKLKAFIFANFIPATGDIIQNYLEQFVANSNRMTVVGTCGLIVTALLLIYSVDSVLNIIWRSKIQRSLVFSFAVYWMVLTLGPILVGASMVISSYLLSLHWLAHARVDSMIDEILRVFPLLISWVSFWLLYSVVPTVRVPARDALIGALVAALLFELGKKGFAMYITLFPSYQLIYGVLAVIPILFLWVYWSWCIVLLGAEITVTLGEYRAERHHAKSVITQSPEM</sequence>
<evidence type="ECO:0000255" key="1">
    <source>
        <dbReference type="HAMAP-Rule" id="MF_00672"/>
    </source>
</evidence>
<protein>
    <recommendedName>
        <fullName evidence="1">UPF0761 membrane protein YPTS_0028</fullName>
    </recommendedName>
</protein>
<reference key="1">
    <citation type="submission" date="2008-04" db="EMBL/GenBank/DDBJ databases">
        <title>Complete sequence of Yersinia pseudotuberculosis PB1/+.</title>
        <authorList>
            <person name="Copeland A."/>
            <person name="Lucas S."/>
            <person name="Lapidus A."/>
            <person name="Glavina del Rio T."/>
            <person name="Dalin E."/>
            <person name="Tice H."/>
            <person name="Bruce D."/>
            <person name="Goodwin L."/>
            <person name="Pitluck S."/>
            <person name="Munk A.C."/>
            <person name="Brettin T."/>
            <person name="Detter J.C."/>
            <person name="Han C."/>
            <person name="Tapia R."/>
            <person name="Schmutz J."/>
            <person name="Larimer F."/>
            <person name="Land M."/>
            <person name="Hauser L."/>
            <person name="Challacombe J.F."/>
            <person name="Green L."/>
            <person name="Lindler L.E."/>
            <person name="Nikolich M.P."/>
            <person name="Richardson P."/>
        </authorList>
    </citation>
    <scope>NUCLEOTIDE SEQUENCE [LARGE SCALE GENOMIC DNA]</scope>
    <source>
        <strain>PB1/+</strain>
    </source>
</reference>
<keyword id="KW-0997">Cell inner membrane</keyword>
<keyword id="KW-1003">Cell membrane</keyword>
<keyword id="KW-0472">Membrane</keyword>
<keyword id="KW-0812">Transmembrane</keyword>
<keyword id="KW-1133">Transmembrane helix</keyword>
<organism>
    <name type="scientific">Yersinia pseudotuberculosis serotype IB (strain PB1/+)</name>
    <dbReference type="NCBI Taxonomy" id="502801"/>
    <lineage>
        <taxon>Bacteria</taxon>
        <taxon>Pseudomonadati</taxon>
        <taxon>Pseudomonadota</taxon>
        <taxon>Gammaproteobacteria</taxon>
        <taxon>Enterobacterales</taxon>
        <taxon>Yersiniaceae</taxon>
        <taxon>Yersinia</taxon>
    </lineage>
</organism>
<feature type="chain" id="PRO_1000131572" description="UPF0761 membrane protein YPTS_0028">
    <location>
        <begin position="1"/>
        <end position="294"/>
    </location>
</feature>
<feature type="transmembrane region" description="Helical" evidence="1">
    <location>
        <begin position="44"/>
        <end position="64"/>
    </location>
</feature>
<feature type="transmembrane region" description="Helical" evidence="1">
    <location>
        <begin position="67"/>
        <end position="87"/>
    </location>
</feature>
<feature type="transmembrane region" description="Helical" evidence="1">
    <location>
        <begin position="108"/>
        <end position="128"/>
    </location>
</feature>
<feature type="transmembrane region" description="Helical" evidence="1">
    <location>
        <begin position="136"/>
        <end position="156"/>
    </location>
</feature>
<feature type="transmembrane region" description="Helical" evidence="1">
    <location>
        <begin position="185"/>
        <end position="205"/>
    </location>
</feature>
<feature type="transmembrane region" description="Helical" evidence="1">
    <location>
        <begin position="212"/>
        <end position="232"/>
    </location>
</feature>
<feature type="transmembrane region" description="Helical" evidence="1">
    <location>
        <begin position="246"/>
        <end position="266"/>
    </location>
</feature>
<name>Y028_YERPB</name>
<gene>
    <name type="ordered locus">YPTS_0028</name>
</gene>
<accession>B2JYL3</accession>